<name>DBP7_EREGS</name>
<feature type="chain" id="PRO_0000227949" description="ATP-dependent RNA helicase DBP7">
    <location>
        <begin position="1"/>
        <end position="710"/>
    </location>
</feature>
<feature type="domain" description="Helicase ATP-binding" evidence="2">
    <location>
        <begin position="167"/>
        <end position="361"/>
    </location>
</feature>
<feature type="domain" description="Helicase C-terminal" evidence="3">
    <location>
        <begin position="396"/>
        <end position="588"/>
    </location>
</feature>
<feature type="region of interest" description="Disordered" evidence="4">
    <location>
        <begin position="1"/>
        <end position="97"/>
    </location>
</feature>
<feature type="region of interest" description="Disordered" evidence="4">
    <location>
        <begin position="669"/>
        <end position="690"/>
    </location>
</feature>
<feature type="short sequence motif" description="Q motif">
    <location>
        <begin position="134"/>
        <end position="163"/>
    </location>
</feature>
<feature type="short sequence motif" description="DEAD box">
    <location>
        <begin position="296"/>
        <end position="299"/>
    </location>
</feature>
<feature type="compositionally biased region" description="Polar residues" evidence="4">
    <location>
        <begin position="11"/>
        <end position="21"/>
    </location>
</feature>
<feature type="compositionally biased region" description="Low complexity" evidence="4">
    <location>
        <begin position="54"/>
        <end position="68"/>
    </location>
</feature>
<feature type="binding site" evidence="2">
    <location>
        <begin position="180"/>
        <end position="187"/>
    </location>
    <ligand>
        <name>ATP</name>
        <dbReference type="ChEBI" id="CHEBI:30616"/>
    </ligand>
</feature>
<protein>
    <recommendedName>
        <fullName>ATP-dependent RNA helicase DBP7</fullName>
        <ecNumber>3.6.4.13</ecNumber>
    </recommendedName>
</protein>
<comment type="function">
    <text evidence="1">ATP-binding RNA helicase involved in the biogenesis of 60S ribosomal subunits and is required for the normal formation of 25S and 5.8S rRNAs.</text>
</comment>
<comment type="catalytic activity">
    <reaction>
        <text>ATP + H2O = ADP + phosphate + H(+)</text>
        <dbReference type="Rhea" id="RHEA:13065"/>
        <dbReference type="ChEBI" id="CHEBI:15377"/>
        <dbReference type="ChEBI" id="CHEBI:15378"/>
        <dbReference type="ChEBI" id="CHEBI:30616"/>
        <dbReference type="ChEBI" id="CHEBI:43474"/>
        <dbReference type="ChEBI" id="CHEBI:456216"/>
        <dbReference type="EC" id="3.6.4.13"/>
    </reaction>
</comment>
<comment type="subcellular location">
    <subcellularLocation>
        <location evidence="1">Nucleus</location>
        <location evidence="1">Nucleolus</location>
    </subcellularLocation>
</comment>
<comment type="domain">
    <text>The Q motif is unique to and characteristic of the DEAD box family of RNA helicases and controls ATP binding and hydrolysis.</text>
</comment>
<comment type="miscellaneous">
    <text>Present with 1460 molecules/cell in log phase SD medium.</text>
</comment>
<comment type="similarity">
    <text evidence="5">Belongs to the DEAD box helicase family. DDX31/DBP7 subfamily.</text>
</comment>
<sequence length="710" mass="77952">MSDNDGLMLMNFTTESGPDNASSHRRVKVTGGKWKERRKLKMKLEGRPLRPKRPAAAVEEAPAAAVPEGSAIEPAAKRPRGRNERAPKDVPPQPANAQVVSSLFTSTRAITTSVNDHERASNDVAPSNAPLLQDTFEALGVRGTLLEHLTGKMKIQKPTKIQKMAIPEVLNGKADLFLHAQTGSGKTLAFLLPVLQTLLSLEQRIDRHSGCFAMIVTPTRELAAQIYGVISTLAQCCHYLVPCLLVGGERKKSEKARLRKGANFIVGTPGRMLDHLQNTKVAREQLPHSLRYLILDEGDKLMELGFEETLKSILEIVHSVACDNTRFPRLPQRIVHVLCSATRQGTVSKLGDIALTDPKVIAASDSTTDVSTVPDQLLQKIAIVPPKLRLVTLCAAISELSRKAPTETTTRTIVFISCADSVDFHYDVFSGLGGSHRDLVPGTVRELAAGSRALPCFSADSPPNTVFYKLHGSLPQAVRVATLRHFSSDAAATRGKHLVLFCTDVASRGLDLPRVSTVIEMDPPFAVEDHLHRIGRTARAGVAGESLLFLLPGEEEGYMEHIRAHHPRGWELLRYDRDLLAPAFAAPVARSDRPTTATDAAWDSNATTWHLNVERRVLEDPSAKDLAIKGYTSHIRAYATHISQEKRFFNVRCLHLGHLAKAFGLRERPKGMAAHRGKPATPKPKQDDARTKMLRMARQAVAQSNSEFNY</sequence>
<keyword id="KW-0067">ATP-binding</keyword>
<keyword id="KW-0347">Helicase</keyword>
<keyword id="KW-0378">Hydrolase</keyword>
<keyword id="KW-0547">Nucleotide-binding</keyword>
<keyword id="KW-0539">Nucleus</keyword>
<keyword id="KW-1185">Reference proteome</keyword>
<keyword id="KW-0690">Ribosome biogenesis</keyword>
<keyword id="KW-0694">RNA-binding</keyword>
<keyword id="KW-0698">rRNA processing</keyword>
<gene>
    <name type="primary">DBP7</name>
    <name type="ordered locus">AFR082C</name>
</gene>
<accession>Q754J2</accession>
<organism>
    <name type="scientific">Eremothecium gossypii (strain ATCC 10895 / CBS 109.51 / FGSC 9923 / NRRL Y-1056)</name>
    <name type="common">Yeast</name>
    <name type="synonym">Ashbya gossypii</name>
    <dbReference type="NCBI Taxonomy" id="284811"/>
    <lineage>
        <taxon>Eukaryota</taxon>
        <taxon>Fungi</taxon>
        <taxon>Dikarya</taxon>
        <taxon>Ascomycota</taxon>
        <taxon>Saccharomycotina</taxon>
        <taxon>Saccharomycetes</taxon>
        <taxon>Saccharomycetales</taxon>
        <taxon>Saccharomycetaceae</taxon>
        <taxon>Eremothecium</taxon>
    </lineage>
</organism>
<evidence type="ECO:0000250" key="1"/>
<evidence type="ECO:0000255" key="2">
    <source>
        <dbReference type="PROSITE-ProRule" id="PRU00541"/>
    </source>
</evidence>
<evidence type="ECO:0000255" key="3">
    <source>
        <dbReference type="PROSITE-ProRule" id="PRU00542"/>
    </source>
</evidence>
<evidence type="ECO:0000256" key="4">
    <source>
        <dbReference type="SAM" id="MobiDB-lite"/>
    </source>
</evidence>
<evidence type="ECO:0000305" key="5"/>
<proteinExistence type="inferred from homology"/>
<dbReference type="EC" id="3.6.4.13"/>
<dbReference type="EMBL" id="AE016819">
    <property type="protein sequence ID" value="AAS53453.1"/>
    <property type="molecule type" value="Genomic_DNA"/>
</dbReference>
<dbReference type="RefSeq" id="NP_985629.1">
    <property type="nucleotide sequence ID" value="NM_210983.1"/>
</dbReference>
<dbReference type="SMR" id="Q754J2"/>
<dbReference type="FunCoup" id="Q754J2">
    <property type="interactions" value="837"/>
</dbReference>
<dbReference type="STRING" id="284811.Q754J2"/>
<dbReference type="EnsemblFungi" id="AAS53453">
    <property type="protein sequence ID" value="AAS53453"/>
    <property type="gene ID" value="AGOS_AFR082C"/>
</dbReference>
<dbReference type="GeneID" id="4621872"/>
<dbReference type="KEGG" id="ago:AGOS_AFR082C"/>
<dbReference type="eggNOG" id="KOG0348">
    <property type="taxonomic scope" value="Eukaryota"/>
</dbReference>
<dbReference type="HOGENOM" id="CLU_003041_26_2_1"/>
<dbReference type="InParanoid" id="Q754J2"/>
<dbReference type="OMA" id="AVHIKAD"/>
<dbReference type="OrthoDB" id="422663at2759"/>
<dbReference type="Proteomes" id="UP000000591">
    <property type="component" value="Chromosome VI"/>
</dbReference>
<dbReference type="GO" id="GO:0005730">
    <property type="term" value="C:nucleolus"/>
    <property type="evidence" value="ECO:0007669"/>
    <property type="project" value="UniProtKB-SubCell"/>
</dbReference>
<dbReference type="GO" id="GO:0005634">
    <property type="term" value="C:nucleus"/>
    <property type="evidence" value="ECO:0000318"/>
    <property type="project" value="GO_Central"/>
</dbReference>
<dbReference type="GO" id="GO:0005524">
    <property type="term" value="F:ATP binding"/>
    <property type="evidence" value="ECO:0007669"/>
    <property type="project" value="UniProtKB-KW"/>
</dbReference>
<dbReference type="GO" id="GO:0016887">
    <property type="term" value="F:ATP hydrolysis activity"/>
    <property type="evidence" value="ECO:0007669"/>
    <property type="project" value="RHEA"/>
</dbReference>
<dbReference type="GO" id="GO:0003723">
    <property type="term" value="F:RNA binding"/>
    <property type="evidence" value="ECO:0007669"/>
    <property type="project" value="UniProtKB-KW"/>
</dbReference>
<dbReference type="GO" id="GO:0003724">
    <property type="term" value="F:RNA helicase activity"/>
    <property type="evidence" value="ECO:0007669"/>
    <property type="project" value="UniProtKB-EC"/>
</dbReference>
<dbReference type="GO" id="GO:0000464">
    <property type="term" value="P:endonucleolytic cleavage in ITS1 upstream of 5.8S rRNA from tricistronic rRNA transcript (SSU-rRNA, 5.8S rRNA, LSU-rRNA)"/>
    <property type="evidence" value="ECO:0007669"/>
    <property type="project" value="EnsemblFungi"/>
</dbReference>
<dbReference type="GO" id="GO:0042254">
    <property type="term" value="P:ribosome biogenesis"/>
    <property type="evidence" value="ECO:0000318"/>
    <property type="project" value="GO_Central"/>
</dbReference>
<dbReference type="CDD" id="cd17949">
    <property type="entry name" value="DEADc_DDX31"/>
    <property type="match status" value="1"/>
</dbReference>
<dbReference type="CDD" id="cd18787">
    <property type="entry name" value="SF2_C_DEAD"/>
    <property type="match status" value="1"/>
</dbReference>
<dbReference type="Gene3D" id="3.40.50.300">
    <property type="entry name" value="P-loop containing nucleotide triphosphate hydrolases"/>
    <property type="match status" value="2"/>
</dbReference>
<dbReference type="InterPro" id="IPR011545">
    <property type="entry name" value="DEAD/DEAH_box_helicase_dom"/>
</dbReference>
<dbReference type="InterPro" id="IPR014001">
    <property type="entry name" value="Helicase_ATP-bd"/>
</dbReference>
<dbReference type="InterPro" id="IPR001650">
    <property type="entry name" value="Helicase_C-like"/>
</dbReference>
<dbReference type="InterPro" id="IPR027417">
    <property type="entry name" value="P-loop_NTPase"/>
</dbReference>
<dbReference type="InterPro" id="IPR014014">
    <property type="entry name" value="RNA_helicase_DEAD_Q_motif"/>
</dbReference>
<dbReference type="InterPro" id="IPR025313">
    <property type="entry name" value="SPB4-like_CTE"/>
</dbReference>
<dbReference type="PANTHER" id="PTHR24031">
    <property type="entry name" value="RNA HELICASE"/>
    <property type="match status" value="1"/>
</dbReference>
<dbReference type="Pfam" id="PF13959">
    <property type="entry name" value="CTE_SPB4"/>
    <property type="match status" value="1"/>
</dbReference>
<dbReference type="Pfam" id="PF00270">
    <property type="entry name" value="DEAD"/>
    <property type="match status" value="1"/>
</dbReference>
<dbReference type="Pfam" id="PF00271">
    <property type="entry name" value="Helicase_C"/>
    <property type="match status" value="1"/>
</dbReference>
<dbReference type="SMART" id="SM00487">
    <property type="entry name" value="DEXDc"/>
    <property type="match status" value="1"/>
</dbReference>
<dbReference type="SMART" id="SM01178">
    <property type="entry name" value="DUF4217"/>
    <property type="match status" value="1"/>
</dbReference>
<dbReference type="SMART" id="SM00490">
    <property type="entry name" value="HELICc"/>
    <property type="match status" value="1"/>
</dbReference>
<dbReference type="SUPFAM" id="SSF52540">
    <property type="entry name" value="P-loop containing nucleoside triphosphate hydrolases"/>
    <property type="match status" value="2"/>
</dbReference>
<dbReference type="PROSITE" id="PS51192">
    <property type="entry name" value="HELICASE_ATP_BIND_1"/>
    <property type="match status" value="1"/>
</dbReference>
<dbReference type="PROSITE" id="PS51194">
    <property type="entry name" value="HELICASE_CTER"/>
    <property type="match status" value="1"/>
</dbReference>
<dbReference type="PROSITE" id="PS51195">
    <property type="entry name" value="Q_MOTIF"/>
    <property type="match status" value="1"/>
</dbReference>
<reference key="1">
    <citation type="journal article" date="2004" name="Science">
        <title>The Ashbya gossypii genome as a tool for mapping the ancient Saccharomyces cerevisiae genome.</title>
        <authorList>
            <person name="Dietrich F.S."/>
            <person name="Voegeli S."/>
            <person name="Brachat S."/>
            <person name="Lerch A."/>
            <person name="Gates K."/>
            <person name="Steiner S."/>
            <person name="Mohr C."/>
            <person name="Poehlmann R."/>
            <person name="Luedi P."/>
            <person name="Choi S."/>
            <person name="Wing R.A."/>
            <person name="Flavier A."/>
            <person name="Gaffney T.D."/>
            <person name="Philippsen P."/>
        </authorList>
    </citation>
    <scope>NUCLEOTIDE SEQUENCE [LARGE SCALE GENOMIC DNA]</scope>
    <source>
        <strain>ATCC 10895 / CBS 109.51 / FGSC 9923 / NRRL Y-1056</strain>
    </source>
</reference>
<reference key="2">
    <citation type="journal article" date="2013" name="G3 (Bethesda)">
        <title>Genomes of Ashbya fungi isolated from insects reveal four mating-type loci, numerous translocations, lack of transposons, and distinct gene duplications.</title>
        <authorList>
            <person name="Dietrich F.S."/>
            <person name="Voegeli S."/>
            <person name="Kuo S."/>
            <person name="Philippsen P."/>
        </authorList>
    </citation>
    <scope>GENOME REANNOTATION</scope>
    <source>
        <strain>ATCC 10895 / CBS 109.51 / FGSC 9923 / NRRL Y-1056</strain>
    </source>
</reference>